<dbReference type="EMBL" id="CP001896">
    <property type="protein sequence ID" value="ADC63511.1"/>
    <property type="molecule type" value="Genomic_DNA"/>
</dbReference>
<dbReference type="RefSeq" id="WP_012971779.1">
    <property type="nucleotide sequence ID" value="NC_013851.1"/>
</dbReference>
<dbReference type="SMR" id="D3RPC1"/>
<dbReference type="STRING" id="572477.Alvin_2601"/>
<dbReference type="KEGG" id="alv:Alvin_2601"/>
<dbReference type="eggNOG" id="COG2210">
    <property type="taxonomic scope" value="Bacteria"/>
</dbReference>
<dbReference type="HOGENOM" id="CLU_094970_1_0_6"/>
<dbReference type="OrthoDB" id="9802028at2"/>
<dbReference type="UniPathway" id="UPA00096"/>
<dbReference type="Proteomes" id="UP000001441">
    <property type="component" value="Chromosome"/>
</dbReference>
<dbReference type="GO" id="GO:0005886">
    <property type="term" value="C:plasma membrane"/>
    <property type="evidence" value="ECO:0007669"/>
    <property type="project" value="UniProtKB-SubCell"/>
</dbReference>
<dbReference type="GO" id="GO:0006790">
    <property type="term" value="P:sulfur compound metabolic process"/>
    <property type="evidence" value="ECO:0007669"/>
    <property type="project" value="UniProtKB-UniPathway"/>
</dbReference>
<dbReference type="Gene3D" id="3.40.1260.10">
    <property type="entry name" value="DsrEFH-like"/>
    <property type="match status" value="1"/>
</dbReference>
<dbReference type="InterPro" id="IPR032836">
    <property type="entry name" value="DsrE2-like"/>
</dbReference>
<dbReference type="InterPro" id="IPR027396">
    <property type="entry name" value="DsrEFH-like"/>
</dbReference>
<dbReference type="NCBIfam" id="NF047629">
    <property type="entry name" value="SulfCarrDsrE2"/>
    <property type="match status" value="1"/>
</dbReference>
<dbReference type="PANTHER" id="PTHR34655">
    <property type="entry name" value="CONSERVED WITHIN P. AEROPHILUM"/>
    <property type="match status" value="1"/>
</dbReference>
<dbReference type="PANTHER" id="PTHR34655:SF2">
    <property type="entry name" value="PEROXIREDOXIN FAMILY PROTEIN"/>
    <property type="match status" value="1"/>
</dbReference>
<dbReference type="Pfam" id="PF13686">
    <property type="entry name" value="DrsE_2"/>
    <property type="match status" value="1"/>
</dbReference>
<dbReference type="SUPFAM" id="SSF75169">
    <property type="entry name" value="DsrEFH-like"/>
    <property type="match status" value="1"/>
</dbReference>
<evidence type="ECO:0000255" key="1"/>
<evidence type="ECO:0000269" key="2">
    <source>
    </source>
</evidence>
<evidence type="ECO:0000303" key="3">
    <source>
    </source>
</evidence>
<evidence type="ECO:0000305" key="4">
    <source>
    </source>
</evidence>
<evidence type="ECO:0000312" key="5">
    <source>
        <dbReference type="EMBL" id="ADC63511.1"/>
    </source>
</evidence>
<comment type="function">
    <text evidence="2">Sulfur carrier protein probably involved in sulfur trafficking for oxidative dissimilatory sulfur metabolism. May be a component of a cytoplasmic sulfur relay system delivering sulfur to DsrC. Binds sulfur in the presence of sulfide in vitro.</text>
</comment>
<comment type="pathway">
    <text evidence="4">Energy metabolism; sulfur metabolism.</text>
</comment>
<comment type="subcellular location">
    <subcellularLocation>
        <location evidence="1">Cell membrane</location>
        <topology evidence="1">Multi-pass membrane protein</topology>
    </subcellularLocation>
</comment>
<comment type="induction">
    <text evidence="2">Up-regulated under sulfur-oxidizing conditions (at mRNA level), i.e. when grown on reduced sulfur compounds such as sulfide, thiosulfate or elemental sulfur.</text>
</comment>
<comment type="disruption phenotype">
    <text evidence="2">A mutant strain lacking rhd_2599, tusA and dsrE2, although not viable in liquid culture, is clearly sulfur oxidation negative upon growth on solid media containing sulfide, and shows massive accumulation of intercellular sulfur globules.</text>
</comment>
<sequence length="159" mass="17555">MEQKKLAIIATKGSLDWAYPPFILASTAAALGYEVQVFFTFYGLQLLKKKPNLEVTPLGNPGMPMPMGMDKWFPVLGLALPGMQGMMTAMMKQKMKSKGVASIEELRELCQEAEVKMIACQMTVDLFDMPKAEFIDGVEYAGAAAFFEFAGESDICLYI</sequence>
<protein>
    <recommendedName>
        <fullName evidence="4">Sulfur carrier protein DsrE2</fullName>
    </recommendedName>
</protein>
<accession>D3RPC1</accession>
<keyword id="KW-1003">Cell membrane</keyword>
<keyword id="KW-0472">Membrane</keyword>
<keyword id="KW-1185">Reference proteome</keyword>
<keyword id="KW-0812">Transmembrane</keyword>
<keyword id="KW-1133">Transmembrane helix</keyword>
<feature type="chain" id="PRO_0000439099" description="Sulfur carrier protein DsrE2">
    <location>
        <begin position="1"/>
        <end position="159"/>
    </location>
</feature>
<feature type="transmembrane region" description="Helical" evidence="1">
    <location>
        <begin position="21"/>
        <end position="43"/>
    </location>
</feature>
<feature type="transmembrane region" description="Helical" evidence="1">
    <location>
        <begin position="72"/>
        <end position="91"/>
    </location>
</feature>
<organism>
    <name type="scientific">Allochromatium vinosum (strain ATCC 17899 / DSM 180 / NBRC 103801 / NCIMB 10441 / D)</name>
    <name type="common">Chromatium vinosum</name>
    <dbReference type="NCBI Taxonomy" id="572477"/>
    <lineage>
        <taxon>Bacteria</taxon>
        <taxon>Pseudomonadati</taxon>
        <taxon>Pseudomonadota</taxon>
        <taxon>Gammaproteobacteria</taxon>
        <taxon>Chromatiales</taxon>
        <taxon>Chromatiaceae</taxon>
        <taxon>Allochromatium</taxon>
    </lineage>
</organism>
<name>DSRE2_ALLVD</name>
<reference key="1">
    <citation type="journal article" date="2011" name="Stand. Genomic Sci.">
        <title>Complete genome sequence of Allochromatium vinosum DSM 180(T).</title>
        <authorList>
            <person name="Weissgerber T."/>
            <person name="Zigann R."/>
            <person name="Bruce D."/>
            <person name="Chang Y.J."/>
            <person name="Detter J.C."/>
            <person name="Han C."/>
            <person name="Hauser L."/>
            <person name="Jeffries C.D."/>
            <person name="Land M."/>
            <person name="Munk A.C."/>
            <person name="Tapia R."/>
            <person name="Dahl C."/>
        </authorList>
    </citation>
    <scope>NUCLEOTIDE SEQUENCE [LARGE SCALE GENOMIC DNA]</scope>
    <source>
        <strain>ATCC 17899 / DSM 180 / NBRC 103801 / NCIMB 10441 / D</strain>
    </source>
</reference>
<reference key="2">
    <citation type="journal article" date="2014" name="J. Biol. Chem.">
        <title>New proteins involved in sulfur trafficking in the cytoplasm of Allochromatium vinosum.</title>
        <authorList>
            <person name="Stockdreher Y."/>
            <person name="Sturm M."/>
            <person name="Josten M."/>
            <person name="Sahl H.G."/>
            <person name="Dobler N."/>
            <person name="Zigann R."/>
            <person name="Dahl C."/>
        </authorList>
    </citation>
    <scope>FUNCTION</scope>
    <scope>INDUCTION</scope>
    <scope>DISRUPTION PHENOTYPE</scope>
    <scope>SULFUR-BINDING</scope>
    <scope>PATHWAY</scope>
    <source>
        <strain>ATCC 17899 / DSM 180 / NBRC 103801 / NCIMB 10441 / D</strain>
    </source>
</reference>
<proteinExistence type="evidence at protein level"/>
<gene>
    <name evidence="3" type="primary">dsrE2</name>
    <name evidence="5" type="ordered locus">Alvin_2601</name>
</gene>